<protein>
    <recommendedName>
        <fullName>Probable pectate lyase A</fullName>
        <ecNumber>4.2.2.2</ecNumber>
    </recommendedName>
</protein>
<gene>
    <name type="primary">plyA</name>
    <name type="ORF">An10g00870</name>
</gene>
<organism>
    <name type="scientific">Aspergillus niger (strain ATCC MYA-4892 / CBS 513.88 / FGSC A1513)</name>
    <dbReference type="NCBI Taxonomy" id="425011"/>
    <lineage>
        <taxon>Eukaryota</taxon>
        <taxon>Fungi</taxon>
        <taxon>Dikarya</taxon>
        <taxon>Ascomycota</taxon>
        <taxon>Pezizomycotina</taxon>
        <taxon>Eurotiomycetes</taxon>
        <taxon>Eurotiomycetidae</taxon>
        <taxon>Eurotiales</taxon>
        <taxon>Aspergillaceae</taxon>
        <taxon>Aspergillus</taxon>
        <taxon>Aspergillus subgen. Circumdati</taxon>
    </lineage>
</organism>
<name>PLYA_ASPNC</name>
<keyword id="KW-0106">Calcium</keyword>
<keyword id="KW-0119">Carbohydrate metabolism</keyword>
<keyword id="KW-0961">Cell wall biogenesis/degradation</keyword>
<keyword id="KW-0325">Glycoprotein</keyword>
<keyword id="KW-0456">Lyase</keyword>
<keyword id="KW-0479">Metal-binding</keyword>
<keyword id="KW-0624">Polysaccharide degradation</keyword>
<keyword id="KW-1185">Reference proteome</keyword>
<keyword id="KW-0964">Secreted</keyword>
<keyword id="KW-0732">Signal</keyword>
<evidence type="ECO:0000250" key="1"/>
<evidence type="ECO:0000255" key="2"/>
<evidence type="ECO:0000305" key="3"/>
<comment type="function">
    <text evidence="1">Pectinolytic enzyme consist of four classes of enzymes: pectin lyase, polygalacturonase, pectin methylesterase and rhamnogalacturonase. Among pectinolytic enzymes, pectin lyase is the most important in depolymerization of pectin, since it cleaves internal glycosidic bonds of highly methylated pectins. Favors pectate, the anion, over pectin, the methyl ester (By similarity).</text>
</comment>
<comment type="catalytic activity">
    <reaction>
        <text>Eliminative cleavage of (1-&gt;4)-alpha-D-galacturonan to give oligosaccharides with 4-deoxy-alpha-D-galact-4-enuronosyl groups at their non-reducing ends.</text>
        <dbReference type="EC" id="4.2.2.2"/>
    </reaction>
</comment>
<comment type="cofactor">
    <cofactor evidence="1">
        <name>Ca(2+)</name>
        <dbReference type="ChEBI" id="CHEBI:29108"/>
    </cofactor>
    <text evidence="1">Binds 1 Ca(2+) ion per subunit.</text>
</comment>
<comment type="subcellular location">
    <subcellularLocation>
        <location evidence="1">Secreted</location>
    </subcellularLocation>
</comment>
<comment type="similarity">
    <text evidence="3">Belongs to the polysaccharide lyase 1 family.</text>
</comment>
<reference key="1">
    <citation type="journal article" date="2007" name="Nat. Biotechnol.">
        <title>Genome sequencing and analysis of the versatile cell factory Aspergillus niger CBS 513.88.</title>
        <authorList>
            <person name="Pel H.J."/>
            <person name="de Winde J.H."/>
            <person name="Archer D.B."/>
            <person name="Dyer P.S."/>
            <person name="Hofmann G."/>
            <person name="Schaap P.J."/>
            <person name="Turner G."/>
            <person name="de Vries R.P."/>
            <person name="Albang R."/>
            <person name="Albermann K."/>
            <person name="Andersen M.R."/>
            <person name="Bendtsen J.D."/>
            <person name="Benen J.A.E."/>
            <person name="van den Berg M."/>
            <person name="Breestraat S."/>
            <person name="Caddick M.X."/>
            <person name="Contreras R."/>
            <person name="Cornell M."/>
            <person name="Coutinho P.M."/>
            <person name="Danchin E.G.J."/>
            <person name="Debets A.J.M."/>
            <person name="Dekker P."/>
            <person name="van Dijck P.W.M."/>
            <person name="van Dijk A."/>
            <person name="Dijkhuizen L."/>
            <person name="Driessen A.J.M."/>
            <person name="d'Enfert C."/>
            <person name="Geysens S."/>
            <person name="Goosen C."/>
            <person name="Groot G.S.P."/>
            <person name="de Groot P.W.J."/>
            <person name="Guillemette T."/>
            <person name="Henrissat B."/>
            <person name="Herweijer M."/>
            <person name="van den Hombergh J.P.T.W."/>
            <person name="van den Hondel C.A.M.J.J."/>
            <person name="van der Heijden R.T.J.M."/>
            <person name="van der Kaaij R.M."/>
            <person name="Klis F.M."/>
            <person name="Kools H.J."/>
            <person name="Kubicek C.P."/>
            <person name="van Kuyk P.A."/>
            <person name="Lauber J."/>
            <person name="Lu X."/>
            <person name="van der Maarel M.J.E.C."/>
            <person name="Meulenberg R."/>
            <person name="Menke H."/>
            <person name="Mortimer M.A."/>
            <person name="Nielsen J."/>
            <person name="Oliver S.G."/>
            <person name="Olsthoorn M."/>
            <person name="Pal K."/>
            <person name="van Peij N.N.M.E."/>
            <person name="Ram A.F.J."/>
            <person name="Rinas U."/>
            <person name="Roubos J.A."/>
            <person name="Sagt C.M.J."/>
            <person name="Schmoll M."/>
            <person name="Sun J."/>
            <person name="Ussery D."/>
            <person name="Varga J."/>
            <person name="Vervecken W."/>
            <person name="van de Vondervoort P.J.J."/>
            <person name="Wedler H."/>
            <person name="Woesten H.A.B."/>
            <person name="Zeng A.-P."/>
            <person name="van Ooyen A.J.J."/>
            <person name="Visser J."/>
            <person name="Stam H."/>
        </authorList>
    </citation>
    <scope>NUCLEOTIDE SEQUENCE [LARGE SCALE GENOMIC DNA]</scope>
    <source>
        <strain>ATCC MYA-4892 / CBS 513.88 / FGSC A1513</strain>
    </source>
</reference>
<accession>A2QV36</accession>
<dbReference type="EC" id="4.2.2.2"/>
<dbReference type="EMBL" id="AM270216">
    <property type="protein sequence ID" value="CAK40523.1"/>
    <property type="molecule type" value="Genomic_DNA"/>
</dbReference>
<dbReference type="RefSeq" id="XP_001402478.1">
    <property type="nucleotide sequence ID" value="XM_001402441.1"/>
</dbReference>
<dbReference type="SMR" id="A2QV36"/>
<dbReference type="CAZy" id="PL1">
    <property type="family name" value="Polysaccharide Lyase Family 1"/>
</dbReference>
<dbReference type="GlyCosmos" id="A2QV36">
    <property type="glycosylation" value="1 site, No reported glycans"/>
</dbReference>
<dbReference type="EnsemblFungi" id="CAK40523">
    <property type="protein sequence ID" value="CAK40523"/>
    <property type="gene ID" value="An10g00870"/>
</dbReference>
<dbReference type="GeneID" id="4990338"/>
<dbReference type="KEGG" id="ang:An10g00870"/>
<dbReference type="VEuPathDB" id="FungiDB:An10g00870"/>
<dbReference type="HOGENOM" id="CLU_021894_2_1_1"/>
<dbReference type="BRENDA" id="4.2.2.2">
    <property type="organism ID" value="518"/>
</dbReference>
<dbReference type="Proteomes" id="UP000006706">
    <property type="component" value="Chromosome 5EL"/>
</dbReference>
<dbReference type="GO" id="GO:0005576">
    <property type="term" value="C:extracellular region"/>
    <property type="evidence" value="ECO:0000250"/>
    <property type="project" value="UniProtKB"/>
</dbReference>
<dbReference type="GO" id="GO:0046872">
    <property type="term" value="F:metal ion binding"/>
    <property type="evidence" value="ECO:0007669"/>
    <property type="project" value="UniProtKB-KW"/>
</dbReference>
<dbReference type="GO" id="GO:0030570">
    <property type="term" value="F:pectate lyase activity"/>
    <property type="evidence" value="ECO:0000314"/>
    <property type="project" value="AspGD"/>
</dbReference>
<dbReference type="GO" id="GO:0071555">
    <property type="term" value="P:cell wall organization"/>
    <property type="evidence" value="ECO:0007669"/>
    <property type="project" value="UniProtKB-KW"/>
</dbReference>
<dbReference type="GO" id="GO:0045490">
    <property type="term" value="P:pectin catabolic process"/>
    <property type="evidence" value="ECO:0000314"/>
    <property type="project" value="AspGD"/>
</dbReference>
<dbReference type="FunFam" id="2.160.20.10:FF:000036">
    <property type="entry name" value="Pectate lyase A"/>
    <property type="match status" value="1"/>
</dbReference>
<dbReference type="Gene3D" id="2.160.20.10">
    <property type="entry name" value="Single-stranded right-handed beta-helix, Pectin lyase-like"/>
    <property type="match status" value="1"/>
</dbReference>
<dbReference type="InterPro" id="IPR002022">
    <property type="entry name" value="Pec_lyase"/>
</dbReference>
<dbReference type="InterPro" id="IPR012334">
    <property type="entry name" value="Pectin_lyas_fold"/>
</dbReference>
<dbReference type="InterPro" id="IPR011050">
    <property type="entry name" value="Pectin_lyase_fold/virulence"/>
</dbReference>
<dbReference type="InterPro" id="IPR045032">
    <property type="entry name" value="PEL"/>
</dbReference>
<dbReference type="PANTHER" id="PTHR31683">
    <property type="entry name" value="PECTATE LYASE 18-RELATED"/>
    <property type="match status" value="1"/>
</dbReference>
<dbReference type="PANTHER" id="PTHR31683:SF18">
    <property type="entry name" value="PECTATE LYASE 21-RELATED"/>
    <property type="match status" value="1"/>
</dbReference>
<dbReference type="Pfam" id="PF00544">
    <property type="entry name" value="Pectate_lyase_4"/>
    <property type="match status" value="1"/>
</dbReference>
<dbReference type="SMART" id="SM00656">
    <property type="entry name" value="Amb_all"/>
    <property type="match status" value="1"/>
</dbReference>
<dbReference type="SUPFAM" id="SSF51126">
    <property type="entry name" value="Pectin lyase-like"/>
    <property type="match status" value="1"/>
</dbReference>
<proteinExistence type="inferred from homology"/>
<sequence length="323" mass="34323">MTNFKWIVAAAGLLSGQVLAAPTATSTHAKRATVSDAAFGYASLNGGTTGGAGGTTTTVSSYAAFTSAVSGDDAKVVYVDGTIKQTADQVKIGSNTSIIGKDANAILEGFGVLVKEKENVIIRNLGVSKVLADNGDAIGVQYSNNVWIDHCDVSSDRDHDKDYYDGLIDITHGSDYVTVSNTFIHDHWKASLVGHSDSNEDEDSGHLTVTYANNYWYNINSRAPSFRFGTGHVYNSYYLDVSDGINTRDGAQLLVESNQFVDSKKALYSTDDGYAVSNDNDFGDSENTAEEGTLTSMPYDYTLLGSANVKAAVVGTAGQTLTF</sequence>
<feature type="signal peptide" evidence="2">
    <location>
        <begin position="1"/>
        <end position="20"/>
    </location>
</feature>
<feature type="chain" id="PRO_5000220507" description="Probable pectate lyase A">
    <location>
        <begin position="21"/>
        <end position="323"/>
    </location>
</feature>
<feature type="active site" evidence="2">
    <location>
        <position position="222"/>
    </location>
</feature>
<feature type="binding site" evidence="1">
    <location>
        <position position="136"/>
    </location>
    <ligand>
        <name>Ca(2+)</name>
        <dbReference type="ChEBI" id="CHEBI:29108"/>
    </ligand>
</feature>
<feature type="binding site" evidence="1">
    <location>
        <position position="165"/>
    </location>
    <ligand>
        <name>Ca(2+)</name>
        <dbReference type="ChEBI" id="CHEBI:29108"/>
    </ligand>
</feature>
<feature type="binding site" evidence="1">
    <location>
        <position position="169"/>
    </location>
    <ligand>
        <name>Ca(2+)</name>
        <dbReference type="ChEBI" id="CHEBI:29108"/>
    </ligand>
</feature>
<feature type="glycosylation site" description="N-linked (GlcNAc...) asparagine" evidence="2">
    <location>
        <position position="95"/>
    </location>
</feature>